<sequence length="91" mass="9929">MANNPGAKKAIRKIARRTEVNTARRSRVRTFLRKFEDAIAKGDVAVAKAAFVEAQSELMRAVSKGVVHPNTGSRKVSRLAARLKKLDKAAA</sequence>
<reference key="1">
    <citation type="journal article" date="2010" name="J. Bacteriol.">
        <title>The genetic basis of laboratory adaptation in Caulobacter crescentus.</title>
        <authorList>
            <person name="Marks M.E."/>
            <person name="Castro-Rojas C.M."/>
            <person name="Teiling C."/>
            <person name="Du L."/>
            <person name="Kapatral V."/>
            <person name="Walunas T.L."/>
            <person name="Crosson S."/>
        </authorList>
    </citation>
    <scope>NUCLEOTIDE SEQUENCE [LARGE SCALE GENOMIC DNA]</scope>
    <source>
        <strain>NA1000 / CB15N</strain>
    </source>
</reference>
<reference key="2">
    <citation type="journal article" date="1994" name="J. Bacteriol.">
        <title>Expression of Caulobacter dnaA as a function of the cell cycle.</title>
        <authorList>
            <person name="Zweiger G."/>
            <person name="Shapiro L."/>
        </authorList>
    </citation>
    <scope>NUCLEOTIDE SEQUENCE [GENOMIC DNA] OF 26-91</scope>
</reference>
<protein>
    <recommendedName>
        <fullName evidence="2">Small ribosomal subunit protein bS20</fullName>
    </recommendedName>
    <alternativeName>
        <fullName>30S ribosomal protein S20</fullName>
    </alternativeName>
</protein>
<evidence type="ECO:0000250" key="1"/>
<evidence type="ECO:0000305" key="2"/>
<feature type="chain" id="PRO_0000378306" description="Small ribosomal subunit protein bS20">
    <location>
        <begin position="1"/>
        <end position="91"/>
    </location>
</feature>
<comment type="function">
    <text evidence="1">Binds directly to 16S ribosomal RNA.</text>
</comment>
<comment type="similarity">
    <text evidence="2">Belongs to the bacterial ribosomal protein bS20 family.</text>
</comment>
<dbReference type="EMBL" id="CP001340">
    <property type="protein sequence ID" value="ACL93474.2"/>
    <property type="molecule type" value="Genomic_DNA"/>
</dbReference>
<dbReference type="EMBL" id="U01667">
    <property type="status" value="NOT_ANNOTATED_CDS"/>
    <property type="molecule type" value="Genomic_DNA"/>
</dbReference>
<dbReference type="PIR" id="A36947">
    <property type="entry name" value="A36947"/>
</dbReference>
<dbReference type="RefSeq" id="WP_004617408.1">
    <property type="nucleotide sequence ID" value="NC_011916.1"/>
</dbReference>
<dbReference type="RefSeq" id="YP_002515382.2">
    <property type="nucleotide sequence ID" value="NC_011916.1"/>
</dbReference>
<dbReference type="SMR" id="B8GWW4"/>
<dbReference type="GeneID" id="7333148"/>
<dbReference type="KEGG" id="ccs:CCNA_00007"/>
<dbReference type="PATRIC" id="fig|565050.3.peg.7"/>
<dbReference type="HOGENOM" id="CLU_160655_3_0_5"/>
<dbReference type="OrthoDB" id="9807974at2"/>
<dbReference type="PhylomeDB" id="B8GWW4"/>
<dbReference type="Proteomes" id="UP000001364">
    <property type="component" value="Chromosome"/>
</dbReference>
<dbReference type="GO" id="GO:0005829">
    <property type="term" value="C:cytosol"/>
    <property type="evidence" value="ECO:0007669"/>
    <property type="project" value="TreeGrafter"/>
</dbReference>
<dbReference type="GO" id="GO:0015935">
    <property type="term" value="C:small ribosomal subunit"/>
    <property type="evidence" value="ECO:0007669"/>
    <property type="project" value="TreeGrafter"/>
</dbReference>
<dbReference type="GO" id="GO:0070181">
    <property type="term" value="F:small ribosomal subunit rRNA binding"/>
    <property type="evidence" value="ECO:0007669"/>
    <property type="project" value="TreeGrafter"/>
</dbReference>
<dbReference type="GO" id="GO:0003735">
    <property type="term" value="F:structural constituent of ribosome"/>
    <property type="evidence" value="ECO:0007669"/>
    <property type="project" value="InterPro"/>
</dbReference>
<dbReference type="GO" id="GO:0006412">
    <property type="term" value="P:translation"/>
    <property type="evidence" value="ECO:0007669"/>
    <property type="project" value="UniProtKB-UniRule"/>
</dbReference>
<dbReference type="FunFam" id="1.20.58.110:FF:000001">
    <property type="entry name" value="30S ribosomal protein S20"/>
    <property type="match status" value="1"/>
</dbReference>
<dbReference type="Gene3D" id="1.20.58.110">
    <property type="entry name" value="Ribosomal protein S20"/>
    <property type="match status" value="1"/>
</dbReference>
<dbReference type="HAMAP" id="MF_00500">
    <property type="entry name" value="Ribosomal_bS20"/>
    <property type="match status" value="1"/>
</dbReference>
<dbReference type="InterPro" id="IPR002583">
    <property type="entry name" value="Ribosomal_bS20"/>
</dbReference>
<dbReference type="InterPro" id="IPR036510">
    <property type="entry name" value="Ribosomal_bS20_sf"/>
</dbReference>
<dbReference type="NCBIfam" id="TIGR00029">
    <property type="entry name" value="S20"/>
    <property type="match status" value="1"/>
</dbReference>
<dbReference type="PANTHER" id="PTHR33398">
    <property type="entry name" value="30S RIBOSOMAL PROTEIN S20"/>
    <property type="match status" value="1"/>
</dbReference>
<dbReference type="PANTHER" id="PTHR33398:SF1">
    <property type="entry name" value="SMALL RIBOSOMAL SUBUNIT PROTEIN BS20C"/>
    <property type="match status" value="1"/>
</dbReference>
<dbReference type="Pfam" id="PF01649">
    <property type="entry name" value="Ribosomal_S20p"/>
    <property type="match status" value="1"/>
</dbReference>
<dbReference type="SUPFAM" id="SSF46992">
    <property type="entry name" value="Ribosomal protein S20"/>
    <property type="match status" value="1"/>
</dbReference>
<organism>
    <name type="scientific">Caulobacter vibrioides (strain NA1000 / CB15N)</name>
    <name type="common">Caulobacter crescentus</name>
    <dbReference type="NCBI Taxonomy" id="565050"/>
    <lineage>
        <taxon>Bacteria</taxon>
        <taxon>Pseudomonadati</taxon>
        <taxon>Pseudomonadota</taxon>
        <taxon>Alphaproteobacteria</taxon>
        <taxon>Caulobacterales</taxon>
        <taxon>Caulobacteraceae</taxon>
        <taxon>Caulobacter</taxon>
    </lineage>
</organism>
<gene>
    <name type="primary">rpsT</name>
    <name type="ordered locus">CCNA_00007</name>
</gene>
<name>RS20_CAUVN</name>
<keyword id="KW-1185">Reference proteome</keyword>
<keyword id="KW-0687">Ribonucleoprotein</keyword>
<keyword id="KW-0689">Ribosomal protein</keyword>
<keyword id="KW-0694">RNA-binding</keyword>
<keyword id="KW-0699">rRNA-binding</keyword>
<proteinExistence type="inferred from homology"/>
<accession>B8GWW4</accession>
<accession>P49400</accession>